<comment type="function">
    <text evidence="1">Tyrosine-protein kinase that acts as a cell-surface receptor for fibroblast growth factors and plays an essential role in the regulation of cell proliferation, differentiation, migration and apoptosis, and in the regulation of embryonic development. Required for normal embryonic patterning, limb bud development, lung morphogenesis, osteogenesis and skin development. Plays an essential role in the regulation of osteoblast differentiation, proliferation and apoptosis, and is required for normal skeleton development. Promotes cell proliferation in keratinocytes and immature osteoblasts, but promotes apoptosis in differentiated osteoblasts. Phosphorylates PLCG1, FRS2 and PAK4. Ligand binding leads to the activation of several signaling cascades. Activation of PLCG1 leads to the production of the cellular signaling molecules diacylglycerol and inositol 1,4,5-trisphosphate. Phosphorylation of FRS2 triggers recruitment of GRB2, GAB1, PIK3R1 and SOS1, and mediates activation of RAS, MAPK1/ERK2, MAPK3/ERK1 and the MAP kinase signaling pathway, as well as of the AKT1 signaling pathway. FGFR2 signaling is down-regulated by ubiquitination, internalization and degradation. Mutations that lead to constitutive kinase activation or impair normal FGFR2 maturation, internalization and degradation lead to aberrant signaling. Over-expressed FGFR2 promotes activation of STAT1 (By similarity).</text>
</comment>
<comment type="catalytic activity">
    <reaction evidence="5">
        <text>L-tyrosyl-[protein] + ATP = O-phospho-L-tyrosyl-[protein] + ADP + H(+)</text>
        <dbReference type="Rhea" id="RHEA:10596"/>
        <dbReference type="Rhea" id="RHEA-COMP:10136"/>
        <dbReference type="Rhea" id="RHEA-COMP:20101"/>
        <dbReference type="ChEBI" id="CHEBI:15378"/>
        <dbReference type="ChEBI" id="CHEBI:30616"/>
        <dbReference type="ChEBI" id="CHEBI:46858"/>
        <dbReference type="ChEBI" id="CHEBI:61978"/>
        <dbReference type="ChEBI" id="CHEBI:456216"/>
        <dbReference type="EC" id="2.7.10.1"/>
    </reaction>
</comment>
<comment type="activity regulation">
    <text evidence="1">Present in an inactive conformation in the absence of bound ligand. Ligand binding leads to dimerization and activation by autophosphorylation on tyrosine residues (By similarity).</text>
</comment>
<comment type="subunit">
    <text evidence="1">Monomer. Homodimer after ligand binding (By similarity).</text>
</comment>
<comment type="interaction">
    <interactant intactId="EBI-2268234">
        <id>Q8JG38</id>
    </interactant>
    <interactant intactId="EBI-42470198">
        <id>Q5K373</id>
        <label>fgfrl1b</label>
    </interactant>
    <organismsDiffer>false</organismsDiffer>
    <experiments>2</experiments>
</comment>
<comment type="interaction">
    <interactant intactId="EBI-2268234">
        <id>Q8JG38</id>
    </interactant>
    <interactant intactId="EBI-42470324">
        <id>A0A8M3B365</id>
        <label>lrrtm4l1</label>
    </interactant>
    <organismsDiffer>false</organismsDiffer>
    <experiments>2</experiments>
</comment>
<comment type="interaction">
    <interactant intactId="EBI-2268234">
        <id>Q8JG38</id>
    </interactant>
    <interactant intactId="EBI-42471179">
        <id>A0A8M9Q8Q6</id>
        <label>vstm4b</label>
    </interactant>
    <organismsDiffer>false</organismsDiffer>
    <experiments>2</experiments>
</comment>
<comment type="subcellular location">
    <subcellularLocation>
        <location>Cell membrane</location>
        <topology>Single-pass type I membrane protein</topology>
    </subcellularLocation>
    <subcellularLocation>
        <location evidence="1">Golgi apparatus</location>
    </subcellularLocation>
    <subcellularLocation>
        <location evidence="1">Cytoplasmic vesicle</location>
    </subcellularLocation>
    <text evidence="1">Detected on osteoblast plasma membrane lipid rafts. After ligand binding, the activated receptor is rapidly internalized and degraded (By similarity).</text>
</comment>
<comment type="domain">
    <text evidence="1">The second and third Ig-like domains directly interact with fibroblast growth factors (FGF) and heparan sulfate proteoglycans.</text>
</comment>
<comment type="PTM">
    <text evidence="1">Autophosphorylated. Binding of FGF family members together with heparan sulfate proteoglycan or heparin promotes receptor dimerization and autophosphorylation on tyrosine residues. Autophosphorylation occurs in trans between the two FGFR molecules present in the dimer (By similarity).</text>
</comment>
<comment type="PTM">
    <text evidence="1">N-glycosylated in the endoplasmic reticulum. The N-glycan chains undergo further maturation to an Endo H-resistant form in the Golgi apparatus (By similarity).</text>
</comment>
<comment type="PTM">
    <text evidence="1">Ubiquitinated. FGFR2 is rapidly ubiquitinated after autophosphorylation, leading to internalization and degradation. Subject to degradation both in lysosomes and by the proteasome (By similarity).</text>
</comment>
<comment type="similarity">
    <text evidence="4">Belongs to the protein kinase superfamily. Tyr protein kinase family. Fibroblast growth factor receptor subfamily.</text>
</comment>
<sequence length="817" mass="91388">MFARGWLLGALLLMTLATVSVARPSLKIDLVNTSAPEEPPTKNQNCVPVLFSVHPGELLKLKCPLSGADDVVWTKDSSSLRPDNRTLVARDWLQISDATPKDSGLYSCSATGLRDCDVFSFIVNVTDAISSGDDEDDTERSDDVGADGEQMRLPYWTFPEKMEKKLHAVPAANTVKFRCAAAGNPKPKMRWLKNAKPFRQEDRMGGYKVRLQHWTLIMESVVPSDKGNYTCLVENQYGSIDHTYTLDVVERSPHRPILQAGLPANVTVQVGQDAKFVCKVYSDAQPHIQWLQHYTKNGSCCGPDGLPYVRVLKTAGVNTTDKEIEVLYLPNVTFEDAGEYTCLAGNSIGISYHTAWLTVHPAETNPIETDYPPDYVEIAIYCIGVFLIACMVVIVVVCRMRTSAKKPDFSSQPAVHKLTKQIPLRRQVTVSSDSSSSMSSSTPLVRITTRRSSAHDDPIPEYDLPEDPRWEFSRDKLTLGKPLGEGCFGQVVMAEALGIDKDKPKEAVTVAVKMLKDDATEKDLSDLVSEMEMMKMIGRHKNIINLLGACTQDGPLYVIVEYASKGNLREYLRARRPPGMEYSYDIARVSDEPLTFKDLVSCTYQVARGMEYLASQKCIHRDLAARNVLVTESNVMKIADFGLARDVHNIDYYKKTTNGRLPVKWMAPEALFDRVYTHQSDVWSFGVLMWEIFTLGGSPYPGIPVEELFKLLKEGHRMDKPANCTNELYMMMKDCWHAISSHRPTFKQLVEDLDRILTLATNEEYLDLCAPVEQYSPSFPDTRSSCPSGDDSVFSHDPLADEPCLPKYQHINGGIKT</sequence>
<dbReference type="EC" id="2.7.10.1"/>
<dbReference type="EMBL" id="AJ309303">
    <property type="protein sequence ID" value="CAC84705.1"/>
    <property type="molecule type" value="mRNA"/>
</dbReference>
<dbReference type="SMR" id="Q8JG38"/>
<dbReference type="FunCoup" id="Q8JG38">
    <property type="interactions" value="637"/>
</dbReference>
<dbReference type="IntAct" id="Q8JG38">
    <property type="interactions" value="3"/>
</dbReference>
<dbReference type="STRING" id="7955.ENSDARP00000124472"/>
<dbReference type="GlyCosmos" id="Q8JG38">
    <property type="glycosylation" value="8 sites, No reported glycans"/>
</dbReference>
<dbReference type="PaxDb" id="7955-ENSDARP00000075360"/>
<dbReference type="AGR" id="ZFIN:ZDB-GENE-030323-1"/>
<dbReference type="ZFIN" id="ZDB-GENE-030323-1">
    <property type="gene designation" value="fgfr2"/>
</dbReference>
<dbReference type="eggNOG" id="KOG0200">
    <property type="taxonomic scope" value="Eukaryota"/>
</dbReference>
<dbReference type="InParanoid" id="Q8JG38"/>
<dbReference type="PhylomeDB" id="Q8JG38"/>
<dbReference type="Reactome" id="R-DRE-190375">
    <property type="pathway name" value="FGFR2c ligand binding and activation"/>
</dbReference>
<dbReference type="Reactome" id="R-DRE-190377">
    <property type="pathway name" value="FGFR2b ligand binding and activation"/>
</dbReference>
<dbReference type="Reactome" id="R-DRE-5654221">
    <property type="pathway name" value="Phospholipase C-mediated cascade, FGFR2"/>
</dbReference>
<dbReference type="Reactome" id="R-DRE-5654699">
    <property type="pathway name" value="SHC-mediated cascade:FGFR2"/>
</dbReference>
<dbReference type="Reactome" id="R-DRE-5654700">
    <property type="pathway name" value="FRS-mediated FGFR2 signaling"/>
</dbReference>
<dbReference type="Reactome" id="R-DRE-5673001">
    <property type="pathway name" value="RAF/MAP kinase cascade"/>
</dbReference>
<dbReference type="SignaLink" id="Q8JG38"/>
<dbReference type="PRO" id="PR:Q8JG38"/>
<dbReference type="Proteomes" id="UP000000437">
    <property type="component" value="Unplaced"/>
</dbReference>
<dbReference type="GO" id="GO:0031410">
    <property type="term" value="C:cytoplasmic vesicle"/>
    <property type="evidence" value="ECO:0007669"/>
    <property type="project" value="UniProtKB-KW"/>
</dbReference>
<dbReference type="GO" id="GO:0005794">
    <property type="term" value="C:Golgi apparatus"/>
    <property type="evidence" value="ECO:0007669"/>
    <property type="project" value="UniProtKB-SubCell"/>
</dbReference>
<dbReference type="GO" id="GO:0005886">
    <property type="term" value="C:plasma membrane"/>
    <property type="evidence" value="ECO:0000318"/>
    <property type="project" value="GO_Central"/>
</dbReference>
<dbReference type="GO" id="GO:0043235">
    <property type="term" value="C:receptor complex"/>
    <property type="evidence" value="ECO:0000318"/>
    <property type="project" value="GO_Central"/>
</dbReference>
<dbReference type="GO" id="GO:0005524">
    <property type="term" value="F:ATP binding"/>
    <property type="evidence" value="ECO:0007669"/>
    <property type="project" value="UniProtKB-KW"/>
</dbReference>
<dbReference type="GO" id="GO:0017134">
    <property type="term" value="F:fibroblast growth factor binding"/>
    <property type="evidence" value="ECO:0000314"/>
    <property type="project" value="ZFIN"/>
</dbReference>
<dbReference type="GO" id="GO:0005007">
    <property type="term" value="F:fibroblast growth factor receptor activity"/>
    <property type="evidence" value="ECO:0000318"/>
    <property type="project" value="GO_Central"/>
</dbReference>
<dbReference type="GO" id="GO:0001525">
    <property type="term" value="P:angiogenesis"/>
    <property type="evidence" value="ECO:0000318"/>
    <property type="project" value="GO_Central"/>
</dbReference>
<dbReference type="GO" id="GO:0006915">
    <property type="term" value="P:apoptotic process"/>
    <property type="evidence" value="ECO:0007669"/>
    <property type="project" value="UniProtKB-KW"/>
</dbReference>
<dbReference type="GO" id="GO:0051216">
    <property type="term" value="P:cartilage development"/>
    <property type="evidence" value="ECO:0000316"/>
    <property type="project" value="ZFIN"/>
</dbReference>
<dbReference type="GO" id="GO:0033278">
    <property type="term" value="P:cell proliferation in midbrain"/>
    <property type="evidence" value="ECO:0000315"/>
    <property type="project" value="ZFIN"/>
</dbReference>
<dbReference type="GO" id="GO:0060271">
    <property type="term" value="P:cilium assembly"/>
    <property type="evidence" value="ECO:0000315"/>
    <property type="project" value="ZFIN"/>
</dbReference>
<dbReference type="GO" id="GO:0061371">
    <property type="term" value="P:determination of heart left/right asymmetry"/>
    <property type="evidence" value="ECO:0000315"/>
    <property type="project" value="ZFIN"/>
</dbReference>
<dbReference type="GO" id="GO:0003140">
    <property type="term" value="P:determination of left/right asymmetry in lateral mesoderm"/>
    <property type="evidence" value="ECO:0000315"/>
    <property type="project" value="ZFIN"/>
</dbReference>
<dbReference type="GO" id="GO:0071910">
    <property type="term" value="P:determination of liver left/right asymmetry"/>
    <property type="evidence" value="ECO:0000315"/>
    <property type="project" value="ZFIN"/>
</dbReference>
<dbReference type="GO" id="GO:0035469">
    <property type="term" value="P:determination of pancreatic left/right asymmetry"/>
    <property type="evidence" value="ECO:0000315"/>
    <property type="project" value="ZFIN"/>
</dbReference>
<dbReference type="GO" id="GO:0048565">
    <property type="term" value="P:digestive tract development"/>
    <property type="evidence" value="ECO:0000315"/>
    <property type="project" value="ZFIN"/>
</dbReference>
<dbReference type="GO" id="GO:0008543">
    <property type="term" value="P:fibroblast growth factor receptor signaling pathway"/>
    <property type="evidence" value="ECO:0000318"/>
    <property type="project" value="GO_Central"/>
</dbReference>
<dbReference type="GO" id="GO:0021872">
    <property type="term" value="P:forebrain generation of neurons"/>
    <property type="evidence" value="ECO:0000315"/>
    <property type="project" value="ZFIN"/>
</dbReference>
<dbReference type="GO" id="GO:0042063">
    <property type="term" value="P:gliogenesis"/>
    <property type="evidence" value="ECO:0000315"/>
    <property type="project" value="ZFIN"/>
</dbReference>
<dbReference type="GO" id="GO:0030901">
    <property type="term" value="P:midbrain development"/>
    <property type="evidence" value="ECO:0000315"/>
    <property type="project" value="ZFIN"/>
</dbReference>
<dbReference type="GO" id="GO:0033339">
    <property type="term" value="P:pectoral fin development"/>
    <property type="evidence" value="ECO:0000316"/>
    <property type="project" value="ZFIN"/>
</dbReference>
<dbReference type="GO" id="GO:0008284">
    <property type="term" value="P:positive regulation of cell population proliferation"/>
    <property type="evidence" value="ECO:0000318"/>
    <property type="project" value="GO_Central"/>
</dbReference>
<dbReference type="GO" id="GO:0043410">
    <property type="term" value="P:positive regulation of MAPK cascade"/>
    <property type="evidence" value="ECO:0000318"/>
    <property type="project" value="GO_Central"/>
</dbReference>
<dbReference type="GO" id="GO:1902036">
    <property type="term" value="P:regulation of hematopoietic stem cell differentiation"/>
    <property type="evidence" value="ECO:0000315"/>
    <property type="project" value="ZFIN"/>
</dbReference>
<dbReference type="CDD" id="cd05857">
    <property type="entry name" value="IgI_2_FGFR"/>
    <property type="match status" value="1"/>
</dbReference>
<dbReference type="CDD" id="cd05858">
    <property type="entry name" value="IgI_3_FGFR2"/>
    <property type="match status" value="1"/>
</dbReference>
<dbReference type="CDD" id="cd05101">
    <property type="entry name" value="PTKc_FGFR2"/>
    <property type="match status" value="1"/>
</dbReference>
<dbReference type="FunFam" id="1.10.510.10:FF:000007">
    <property type="entry name" value="Fibroblast growth factor receptor"/>
    <property type="match status" value="1"/>
</dbReference>
<dbReference type="FunFam" id="2.60.40.10:FF:000016">
    <property type="entry name" value="Fibroblast growth factor receptor"/>
    <property type="match status" value="1"/>
</dbReference>
<dbReference type="FunFam" id="2.60.40.10:FF:000020">
    <property type="entry name" value="Fibroblast growth factor receptor"/>
    <property type="match status" value="1"/>
</dbReference>
<dbReference type="FunFam" id="2.60.40.10:FF:000252">
    <property type="entry name" value="Fibroblast growth factor receptor"/>
    <property type="match status" value="1"/>
</dbReference>
<dbReference type="FunFam" id="3.30.200.20:FF:000011">
    <property type="entry name" value="Fibroblast growth factor receptor"/>
    <property type="match status" value="1"/>
</dbReference>
<dbReference type="Gene3D" id="2.60.40.10">
    <property type="entry name" value="Immunoglobulins"/>
    <property type="match status" value="3"/>
</dbReference>
<dbReference type="Gene3D" id="3.30.200.20">
    <property type="entry name" value="Phosphorylase Kinase, domain 1"/>
    <property type="match status" value="1"/>
</dbReference>
<dbReference type="Gene3D" id="1.10.510.10">
    <property type="entry name" value="Transferase(Phosphotransferase) domain 1"/>
    <property type="match status" value="1"/>
</dbReference>
<dbReference type="InterPro" id="IPR016248">
    <property type="entry name" value="FGF_rcpt_fam"/>
</dbReference>
<dbReference type="InterPro" id="IPR007110">
    <property type="entry name" value="Ig-like_dom"/>
</dbReference>
<dbReference type="InterPro" id="IPR036179">
    <property type="entry name" value="Ig-like_dom_sf"/>
</dbReference>
<dbReference type="InterPro" id="IPR013783">
    <property type="entry name" value="Ig-like_fold"/>
</dbReference>
<dbReference type="InterPro" id="IPR013098">
    <property type="entry name" value="Ig_I-set"/>
</dbReference>
<dbReference type="InterPro" id="IPR003599">
    <property type="entry name" value="Ig_sub"/>
</dbReference>
<dbReference type="InterPro" id="IPR003598">
    <property type="entry name" value="Ig_sub2"/>
</dbReference>
<dbReference type="InterPro" id="IPR011009">
    <property type="entry name" value="Kinase-like_dom_sf"/>
</dbReference>
<dbReference type="InterPro" id="IPR000719">
    <property type="entry name" value="Prot_kinase_dom"/>
</dbReference>
<dbReference type="InterPro" id="IPR017441">
    <property type="entry name" value="Protein_kinase_ATP_BS"/>
</dbReference>
<dbReference type="InterPro" id="IPR050122">
    <property type="entry name" value="RTK"/>
</dbReference>
<dbReference type="InterPro" id="IPR001245">
    <property type="entry name" value="Ser-Thr/Tyr_kinase_cat_dom"/>
</dbReference>
<dbReference type="InterPro" id="IPR008266">
    <property type="entry name" value="Tyr_kinase_AS"/>
</dbReference>
<dbReference type="InterPro" id="IPR020635">
    <property type="entry name" value="Tyr_kinase_cat_dom"/>
</dbReference>
<dbReference type="PANTHER" id="PTHR24416:SF130">
    <property type="entry name" value="FIBROBLAST GROWTH FACTOR RECEPTOR 2"/>
    <property type="match status" value="1"/>
</dbReference>
<dbReference type="PANTHER" id="PTHR24416">
    <property type="entry name" value="TYROSINE-PROTEIN KINASE RECEPTOR"/>
    <property type="match status" value="1"/>
</dbReference>
<dbReference type="Pfam" id="PF07679">
    <property type="entry name" value="I-set"/>
    <property type="match status" value="3"/>
</dbReference>
<dbReference type="Pfam" id="PF07714">
    <property type="entry name" value="PK_Tyr_Ser-Thr"/>
    <property type="match status" value="1"/>
</dbReference>
<dbReference type="PIRSF" id="PIRSF000628">
    <property type="entry name" value="FGFR"/>
    <property type="match status" value="1"/>
</dbReference>
<dbReference type="PRINTS" id="PR00109">
    <property type="entry name" value="TYRKINASE"/>
</dbReference>
<dbReference type="SMART" id="SM00409">
    <property type="entry name" value="IG"/>
    <property type="match status" value="3"/>
</dbReference>
<dbReference type="SMART" id="SM00408">
    <property type="entry name" value="IGc2"/>
    <property type="match status" value="3"/>
</dbReference>
<dbReference type="SMART" id="SM00219">
    <property type="entry name" value="TyrKc"/>
    <property type="match status" value="1"/>
</dbReference>
<dbReference type="SUPFAM" id="SSF48726">
    <property type="entry name" value="Immunoglobulin"/>
    <property type="match status" value="3"/>
</dbReference>
<dbReference type="SUPFAM" id="SSF56112">
    <property type="entry name" value="Protein kinase-like (PK-like)"/>
    <property type="match status" value="1"/>
</dbReference>
<dbReference type="PROSITE" id="PS50835">
    <property type="entry name" value="IG_LIKE"/>
    <property type="match status" value="3"/>
</dbReference>
<dbReference type="PROSITE" id="PS00107">
    <property type="entry name" value="PROTEIN_KINASE_ATP"/>
    <property type="match status" value="1"/>
</dbReference>
<dbReference type="PROSITE" id="PS50011">
    <property type="entry name" value="PROTEIN_KINASE_DOM"/>
    <property type="match status" value="1"/>
</dbReference>
<dbReference type="PROSITE" id="PS00109">
    <property type="entry name" value="PROTEIN_KINASE_TYR"/>
    <property type="match status" value="1"/>
</dbReference>
<reference key="1">
    <citation type="submission" date="2001-04" db="EMBL/GenBank/DDBJ databases">
        <title>Cloning and characterization of zebrafish fibroblast growth factor receptor 2 (Z-FGFR2): role of FGFR2-signaling in bone development.</title>
        <authorList>
            <person name="Kaps C."/>
            <person name="Schlombs K."/>
            <person name="Kraus B."/>
            <person name="Odenthal J."/>
            <person name="Langheinrich U."/>
            <person name="Trowe T."/>
        </authorList>
    </citation>
    <scope>NUCLEOTIDE SEQUENCE [MRNA]</scope>
</reference>
<proteinExistence type="evidence at protein level"/>
<accession>Q8JG38</accession>
<name>FGFR2_DANRE</name>
<gene>
    <name type="primary">fgfr2</name>
</gene>
<organism>
    <name type="scientific">Danio rerio</name>
    <name type="common">Zebrafish</name>
    <name type="synonym">Brachydanio rerio</name>
    <dbReference type="NCBI Taxonomy" id="7955"/>
    <lineage>
        <taxon>Eukaryota</taxon>
        <taxon>Metazoa</taxon>
        <taxon>Chordata</taxon>
        <taxon>Craniata</taxon>
        <taxon>Vertebrata</taxon>
        <taxon>Euteleostomi</taxon>
        <taxon>Actinopterygii</taxon>
        <taxon>Neopterygii</taxon>
        <taxon>Teleostei</taxon>
        <taxon>Ostariophysi</taxon>
        <taxon>Cypriniformes</taxon>
        <taxon>Danionidae</taxon>
        <taxon>Danioninae</taxon>
        <taxon>Danio</taxon>
    </lineage>
</organism>
<keyword id="KW-0053">Apoptosis</keyword>
<keyword id="KW-0067">ATP-binding</keyword>
<keyword id="KW-1003">Cell membrane</keyword>
<keyword id="KW-0968">Cytoplasmic vesicle</keyword>
<keyword id="KW-1015">Disulfide bond</keyword>
<keyword id="KW-0325">Glycoprotein</keyword>
<keyword id="KW-0333">Golgi apparatus</keyword>
<keyword id="KW-0393">Immunoglobulin domain</keyword>
<keyword id="KW-0418">Kinase</keyword>
<keyword id="KW-0472">Membrane</keyword>
<keyword id="KW-0547">Nucleotide-binding</keyword>
<keyword id="KW-0597">Phosphoprotein</keyword>
<keyword id="KW-0675">Receptor</keyword>
<keyword id="KW-1185">Reference proteome</keyword>
<keyword id="KW-0677">Repeat</keyword>
<keyword id="KW-0732">Signal</keyword>
<keyword id="KW-0808">Transferase</keyword>
<keyword id="KW-0812">Transmembrane</keyword>
<keyword id="KW-1133">Transmembrane helix</keyword>
<keyword id="KW-0829">Tyrosine-protein kinase</keyword>
<keyword id="KW-0832">Ubl conjugation</keyword>
<evidence type="ECO:0000250" key="1"/>
<evidence type="ECO:0000255" key="2"/>
<evidence type="ECO:0000255" key="3">
    <source>
        <dbReference type="PROSITE-ProRule" id="PRU00114"/>
    </source>
</evidence>
<evidence type="ECO:0000255" key="4">
    <source>
        <dbReference type="PROSITE-ProRule" id="PRU00159"/>
    </source>
</evidence>
<evidence type="ECO:0000255" key="5">
    <source>
        <dbReference type="PROSITE-ProRule" id="PRU10028"/>
    </source>
</evidence>
<evidence type="ECO:0000256" key="6">
    <source>
        <dbReference type="SAM" id="MobiDB-lite"/>
    </source>
</evidence>
<feature type="signal peptide" evidence="2">
    <location>
        <begin position="1"/>
        <end position="22"/>
    </location>
</feature>
<feature type="chain" id="PRO_0000249203" description="Fibroblast growth factor receptor 2">
    <location>
        <begin position="23"/>
        <end position="817"/>
    </location>
</feature>
<feature type="topological domain" description="Extracellular" evidence="2">
    <location>
        <begin position="23"/>
        <end position="377"/>
    </location>
</feature>
<feature type="transmembrane region" description="Helical" evidence="2">
    <location>
        <begin position="378"/>
        <end position="398"/>
    </location>
</feature>
<feature type="topological domain" description="Cytoplasmic" evidence="2">
    <location>
        <begin position="399"/>
        <end position="817"/>
    </location>
</feature>
<feature type="domain" description="Ig-like C2-type 1">
    <location>
        <begin position="26"/>
        <end position="126"/>
    </location>
</feature>
<feature type="domain" description="Ig-like C2-type 2">
    <location>
        <begin position="159"/>
        <end position="247"/>
    </location>
</feature>
<feature type="domain" description="Ig-like C2-type 3">
    <location>
        <begin position="256"/>
        <end position="358"/>
    </location>
</feature>
<feature type="domain" description="Protein kinase" evidence="4">
    <location>
        <begin position="477"/>
        <end position="766"/>
    </location>
</feature>
<feature type="region of interest" description="Heparin-binding" evidence="1">
    <location>
        <begin position="161"/>
        <end position="178"/>
    </location>
</feature>
<feature type="region of interest" description="Disordered" evidence="6">
    <location>
        <begin position="429"/>
        <end position="465"/>
    </location>
</feature>
<feature type="compositionally biased region" description="Low complexity" evidence="6">
    <location>
        <begin position="431"/>
        <end position="441"/>
    </location>
</feature>
<feature type="active site" description="Proton acceptor" evidence="4 5">
    <location>
        <position position="622"/>
    </location>
</feature>
<feature type="binding site" evidence="4">
    <location>
        <begin position="483"/>
        <end position="491"/>
    </location>
    <ligand>
        <name>ATP</name>
        <dbReference type="ChEBI" id="CHEBI:30616"/>
    </ligand>
</feature>
<feature type="binding site" evidence="4">
    <location>
        <position position="513"/>
    </location>
    <ligand>
        <name>ATP</name>
        <dbReference type="ChEBI" id="CHEBI:30616"/>
    </ligand>
</feature>
<feature type="binding site" evidence="4">
    <location>
        <begin position="561"/>
        <end position="563"/>
    </location>
    <ligand>
        <name>ATP</name>
        <dbReference type="ChEBI" id="CHEBI:30616"/>
    </ligand>
</feature>
<feature type="binding site" evidence="4">
    <location>
        <position position="567"/>
    </location>
    <ligand>
        <name>ATP</name>
        <dbReference type="ChEBI" id="CHEBI:30616"/>
    </ligand>
</feature>
<feature type="modified residue" description="Phosphotyrosine; by autocatalysis" evidence="1">
    <location>
        <position position="462"/>
    </location>
</feature>
<feature type="modified residue" description="Phosphotyrosine; by autocatalysis" evidence="1">
    <location>
        <position position="582"/>
    </location>
</feature>
<feature type="modified residue" description="Phosphotyrosine; by autocatalysis" evidence="1">
    <location>
        <position position="652"/>
    </location>
</feature>
<feature type="modified residue" description="Phosphotyrosine; by autocatalysis" evidence="1">
    <location>
        <position position="653"/>
    </location>
</feature>
<feature type="modified residue" description="Phosphotyrosine; by autocatalysis" evidence="1">
    <location>
        <position position="765"/>
    </location>
</feature>
<feature type="glycosylation site" description="N-linked (GlcNAc...) asparagine" evidence="2">
    <location>
        <position position="32"/>
    </location>
</feature>
<feature type="glycosylation site" description="N-linked (GlcNAc...) asparagine" evidence="2">
    <location>
        <position position="84"/>
    </location>
</feature>
<feature type="glycosylation site" description="N-linked (GlcNAc...) asparagine" evidence="2">
    <location>
        <position position="124"/>
    </location>
</feature>
<feature type="glycosylation site" description="N-linked (GlcNAc...) asparagine" evidence="2">
    <location>
        <position position="228"/>
    </location>
</feature>
<feature type="glycosylation site" description="N-linked (GlcNAc...) asparagine" evidence="2">
    <location>
        <position position="265"/>
    </location>
</feature>
<feature type="glycosylation site" description="N-linked (GlcNAc...) asparagine" evidence="2">
    <location>
        <position position="297"/>
    </location>
</feature>
<feature type="glycosylation site" description="N-linked (GlcNAc...) asparagine" evidence="2">
    <location>
        <position position="318"/>
    </location>
</feature>
<feature type="glycosylation site" description="N-linked (GlcNAc...) asparagine" evidence="2">
    <location>
        <position position="331"/>
    </location>
</feature>
<feature type="disulfide bond" evidence="3">
    <location>
        <begin position="63"/>
        <end position="108"/>
    </location>
</feature>
<feature type="disulfide bond" evidence="3">
    <location>
        <begin position="179"/>
        <end position="231"/>
    </location>
</feature>
<feature type="disulfide bond" evidence="3">
    <location>
        <begin position="278"/>
        <end position="342"/>
    </location>
</feature>
<protein>
    <recommendedName>
        <fullName>Fibroblast growth factor receptor 2</fullName>
        <shortName>FGFR-2</shortName>
        <ecNumber>2.7.10.1</ecNumber>
    </recommendedName>
</protein>